<name>BLML_HUMAN</name>
<dbReference type="EMBL" id="AL035704">
    <property type="status" value="NOT_ANNOTATED_CDS"/>
    <property type="molecule type" value="Genomic_DNA"/>
</dbReference>
<dbReference type="EMBL" id="DR731278">
    <property type="status" value="NOT_ANNOTATED_CDS"/>
    <property type="molecule type" value="mRNA"/>
</dbReference>
<dbReference type="SMR" id="A8MY62"/>
<dbReference type="FunCoup" id="A8MY62">
    <property type="interactions" value="2"/>
</dbReference>
<dbReference type="IntAct" id="A8MY62">
    <property type="interactions" value="1"/>
</dbReference>
<dbReference type="STRING" id="9606.ENSP00000402297"/>
<dbReference type="iPTMnet" id="A8MY62"/>
<dbReference type="PhosphoSitePlus" id="A8MY62"/>
<dbReference type="BioMuta" id="LACTBL1"/>
<dbReference type="jPOST" id="A8MY62"/>
<dbReference type="MassIVE" id="A8MY62"/>
<dbReference type="PaxDb" id="9606-ENSP00000402297"/>
<dbReference type="PeptideAtlas" id="A8MY62"/>
<dbReference type="ProteomicsDB" id="2376"/>
<dbReference type="Antibodypedia" id="74317">
    <property type="antibodies" value="8 antibodies from 4 providers"/>
</dbReference>
<dbReference type="UCSC" id="uc057dej.1">
    <property type="organism name" value="human"/>
</dbReference>
<dbReference type="AGR" id="HGNC:35445"/>
<dbReference type="GeneCards" id="LACTBL1"/>
<dbReference type="HGNC" id="HGNC:35445">
    <property type="gene designation" value="LACTBL1"/>
</dbReference>
<dbReference type="neXtProt" id="NX_A8MY62"/>
<dbReference type="VEuPathDB" id="HostDB:ENSG00000215906"/>
<dbReference type="eggNOG" id="ENOG502R2HC">
    <property type="taxonomic scope" value="Eukaryota"/>
</dbReference>
<dbReference type="HOGENOM" id="CLU_042163_1_0_1"/>
<dbReference type="InParanoid" id="A8MY62"/>
<dbReference type="OrthoDB" id="5946976at2759"/>
<dbReference type="PAN-GO" id="A8MY62">
    <property type="GO annotations" value="0 GO annotations based on evolutionary models"/>
</dbReference>
<dbReference type="PhylomeDB" id="A8MY62"/>
<dbReference type="SignaLink" id="A8MY62"/>
<dbReference type="ChiTaRS" id="LACTBL1">
    <property type="organism name" value="human"/>
</dbReference>
<dbReference type="Pharos" id="A8MY62">
    <property type="development level" value="Tdark"/>
</dbReference>
<dbReference type="PRO" id="PR:A8MY62"/>
<dbReference type="Proteomes" id="UP000005640">
    <property type="component" value="Chromosome 1"/>
</dbReference>
<dbReference type="RNAct" id="A8MY62">
    <property type="molecule type" value="protein"/>
</dbReference>
<dbReference type="Bgee" id="ENSG00000215906">
    <property type="expression patterns" value="Expressed in male germ line stem cell (sensu Vertebrata) in testis and 3 other cell types or tissues"/>
</dbReference>
<dbReference type="ExpressionAtlas" id="A8MY62">
    <property type="expression patterns" value="baseline and differential"/>
</dbReference>
<dbReference type="Gene3D" id="3.40.710.10">
    <property type="entry name" value="DD-peptidase/beta-lactamase superfamily"/>
    <property type="match status" value="1"/>
</dbReference>
<dbReference type="InterPro" id="IPR001466">
    <property type="entry name" value="Beta-lactam-related"/>
</dbReference>
<dbReference type="InterPro" id="IPR012338">
    <property type="entry name" value="Beta-lactam/transpept-like"/>
</dbReference>
<dbReference type="InterPro" id="IPR051478">
    <property type="entry name" value="Beta-lactamase-like_AB/R"/>
</dbReference>
<dbReference type="PANTHER" id="PTHR22935:SF95">
    <property type="entry name" value="BETA-LACTAMASE-LIKE 1-RELATED"/>
    <property type="match status" value="1"/>
</dbReference>
<dbReference type="PANTHER" id="PTHR22935">
    <property type="entry name" value="PENICILLIN-BINDING PROTEIN"/>
    <property type="match status" value="1"/>
</dbReference>
<dbReference type="Pfam" id="PF00144">
    <property type="entry name" value="Beta-lactamase"/>
    <property type="match status" value="1"/>
</dbReference>
<dbReference type="SUPFAM" id="SSF56601">
    <property type="entry name" value="beta-lactamase/transpeptidase-like"/>
    <property type="match status" value="1"/>
</dbReference>
<accession>A8MY62</accession>
<comment type="similarity">
    <text evidence="1">Belongs to the beta-lactamase family.</text>
</comment>
<sequence>MCPRHPEPVPLAHPLPVLKEALEKVDQILRQAMSAPGVAAMSAVVIHNDTVLWTGNFGKKNGSDPASGAPNEYTMYRISSISKIFPVLMLYRLWEEGIVASLDDPLERYASTFTINNPLGLASAEQQGLILRRMASQLSGLPRRLRSTSLLWKGSTQEALNLLKDDVLVVDPGTRCHYSTLAFSLLAHVLAAHTAQGDYQRWVSENVLEPLGMADTGFDLTPDVRARLAAGFYGSGRPAPLYDLGWYRPSGQMYSTAADLAKLAVALLGGGPRRLLRPDAAKTLLAPLLACPGAYFANETGTPWEFHAQRGYRVVRKDGDLDGYAATFSLVPPLRLGLVLLLAGPRPPGPDLVARAYDELLPALERALREAEPGPAPPPTAHPFAGYFTFANLTFYEVRAGPAGELRLRQFGPRVEALVPPAFRTLALRHLHGRVFQLHVAHEFPCALPLGDAWLSLEAQHGQLVNFYPLDHHGLSPGFDVPGLNTYRVLRLRGKPVFKT</sequence>
<proteinExistence type="evidence at protein level"/>
<gene>
    <name type="primary">LACTBL1</name>
</gene>
<protein>
    <recommendedName>
        <fullName>Putative beta-lactamase-like 1</fullName>
    </recommendedName>
</protein>
<evidence type="ECO:0000305" key="1"/>
<organism>
    <name type="scientific">Homo sapiens</name>
    <name type="common">Human</name>
    <dbReference type="NCBI Taxonomy" id="9606"/>
    <lineage>
        <taxon>Eukaryota</taxon>
        <taxon>Metazoa</taxon>
        <taxon>Chordata</taxon>
        <taxon>Craniata</taxon>
        <taxon>Vertebrata</taxon>
        <taxon>Euteleostomi</taxon>
        <taxon>Mammalia</taxon>
        <taxon>Eutheria</taxon>
        <taxon>Euarchontoglires</taxon>
        <taxon>Primates</taxon>
        <taxon>Haplorrhini</taxon>
        <taxon>Catarrhini</taxon>
        <taxon>Hominidae</taxon>
        <taxon>Homo</taxon>
    </lineage>
</organism>
<reference key="1">
    <citation type="journal article" date="2006" name="Nature">
        <title>The DNA sequence and biological annotation of human chromosome 1.</title>
        <authorList>
            <person name="Gregory S.G."/>
            <person name="Barlow K.F."/>
            <person name="McLay K.E."/>
            <person name="Kaul R."/>
            <person name="Swarbreck D."/>
            <person name="Dunham A."/>
            <person name="Scott C.E."/>
            <person name="Howe K.L."/>
            <person name="Woodfine K."/>
            <person name="Spencer C.C.A."/>
            <person name="Jones M.C."/>
            <person name="Gillson C."/>
            <person name="Searle S."/>
            <person name="Zhou Y."/>
            <person name="Kokocinski F."/>
            <person name="McDonald L."/>
            <person name="Evans R."/>
            <person name="Phillips K."/>
            <person name="Atkinson A."/>
            <person name="Cooper R."/>
            <person name="Jones C."/>
            <person name="Hall R.E."/>
            <person name="Andrews T.D."/>
            <person name="Lloyd C."/>
            <person name="Ainscough R."/>
            <person name="Almeida J.P."/>
            <person name="Ambrose K.D."/>
            <person name="Anderson F."/>
            <person name="Andrew R.W."/>
            <person name="Ashwell R.I.S."/>
            <person name="Aubin K."/>
            <person name="Babbage A.K."/>
            <person name="Bagguley C.L."/>
            <person name="Bailey J."/>
            <person name="Beasley H."/>
            <person name="Bethel G."/>
            <person name="Bird C.P."/>
            <person name="Bray-Allen S."/>
            <person name="Brown J.Y."/>
            <person name="Brown A.J."/>
            <person name="Buckley D."/>
            <person name="Burton J."/>
            <person name="Bye J."/>
            <person name="Carder C."/>
            <person name="Chapman J.C."/>
            <person name="Clark S.Y."/>
            <person name="Clarke G."/>
            <person name="Clee C."/>
            <person name="Cobley V."/>
            <person name="Collier R.E."/>
            <person name="Corby N."/>
            <person name="Coville G.J."/>
            <person name="Davies J."/>
            <person name="Deadman R."/>
            <person name="Dunn M."/>
            <person name="Earthrowl M."/>
            <person name="Ellington A.G."/>
            <person name="Errington H."/>
            <person name="Frankish A."/>
            <person name="Frankland J."/>
            <person name="French L."/>
            <person name="Garner P."/>
            <person name="Garnett J."/>
            <person name="Gay L."/>
            <person name="Ghori M.R.J."/>
            <person name="Gibson R."/>
            <person name="Gilby L.M."/>
            <person name="Gillett W."/>
            <person name="Glithero R.J."/>
            <person name="Grafham D.V."/>
            <person name="Griffiths C."/>
            <person name="Griffiths-Jones S."/>
            <person name="Grocock R."/>
            <person name="Hammond S."/>
            <person name="Harrison E.S.I."/>
            <person name="Hart E."/>
            <person name="Haugen E."/>
            <person name="Heath P.D."/>
            <person name="Holmes S."/>
            <person name="Holt K."/>
            <person name="Howden P.J."/>
            <person name="Hunt A.R."/>
            <person name="Hunt S.E."/>
            <person name="Hunter G."/>
            <person name="Isherwood J."/>
            <person name="James R."/>
            <person name="Johnson C."/>
            <person name="Johnson D."/>
            <person name="Joy A."/>
            <person name="Kay M."/>
            <person name="Kershaw J.K."/>
            <person name="Kibukawa M."/>
            <person name="Kimberley A.M."/>
            <person name="King A."/>
            <person name="Knights A.J."/>
            <person name="Lad H."/>
            <person name="Laird G."/>
            <person name="Lawlor S."/>
            <person name="Leongamornlert D.A."/>
            <person name="Lloyd D.M."/>
            <person name="Loveland J."/>
            <person name="Lovell J."/>
            <person name="Lush M.J."/>
            <person name="Lyne R."/>
            <person name="Martin S."/>
            <person name="Mashreghi-Mohammadi M."/>
            <person name="Matthews L."/>
            <person name="Matthews N.S.W."/>
            <person name="McLaren S."/>
            <person name="Milne S."/>
            <person name="Mistry S."/>
            <person name="Moore M.J.F."/>
            <person name="Nickerson T."/>
            <person name="O'Dell C.N."/>
            <person name="Oliver K."/>
            <person name="Palmeiri A."/>
            <person name="Palmer S.A."/>
            <person name="Parker A."/>
            <person name="Patel D."/>
            <person name="Pearce A.V."/>
            <person name="Peck A.I."/>
            <person name="Pelan S."/>
            <person name="Phelps K."/>
            <person name="Phillimore B.J."/>
            <person name="Plumb R."/>
            <person name="Rajan J."/>
            <person name="Raymond C."/>
            <person name="Rouse G."/>
            <person name="Saenphimmachak C."/>
            <person name="Sehra H.K."/>
            <person name="Sheridan E."/>
            <person name="Shownkeen R."/>
            <person name="Sims S."/>
            <person name="Skuce C.D."/>
            <person name="Smith M."/>
            <person name="Steward C."/>
            <person name="Subramanian S."/>
            <person name="Sycamore N."/>
            <person name="Tracey A."/>
            <person name="Tromans A."/>
            <person name="Van Helmond Z."/>
            <person name="Wall M."/>
            <person name="Wallis J.M."/>
            <person name="White S."/>
            <person name="Whitehead S.L."/>
            <person name="Wilkinson J.E."/>
            <person name="Willey D.L."/>
            <person name="Williams H."/>
            <person name="Wilming L."/>
            <person name="Wray P.W."/>
            <person name="Wu Z."/>
            <person name="Coulson A."/>
            <person name="Vaudin M."/>
            <person name="Sulston J.E."/>
            <person name="Durbin R.M."/>
            <person name="Hubbard T."/>
            <person name="Wooster R."/>
            <person name="Dunham I."/>
            <person name="Carter N.P."/>
            <person name="McVean G."/>
            <person name="Ross M.T."/>
            <person name="Harrow J."/>
            <person name="Olson M.V."/>
            <person name="Beck S."/>
            <person name="Rogers J."/>
            <person name="Bentley D.R."/>
        </authorList>
    </citation>
    <scope>NUCLEOTIDE SEQUENCE [LARGE SCALE GENOMIC DNA]</scope>
</reference>
<reference key="2">
    <citation type="submission" date="2005-07" db="EMBL/GenBank/DDBJ databases">
        <title>Exhaustive RT-PCR and sequencing of all novel TWINSCAN predictions in human.</title>
        <authorList>
            <person name="Stevens M."/>
            <person name="Wei C."/>
            <person name="Gross S.S."/>
            <person name="McPherson J."/>
            <person name="Brent M.R."/>
        </authorList>
    </citation>
    <scope>NUCLEOTIDE SEQUENCE [LARGE SCALE MRNA] OF 35-130</scope>
</reference>
<keyword id="KW-1267">Proteomics identification</keyword>
<keyword id="KW-1185">Reference proteome</keyword>
<feature type="chain" id="PRO_0000343690" description="Putative beta-lactamase-like 1">
    <location>
        <begin position="1"/>
        <end position="500"/>
    </location>
</feature>
<feature type="sequence conflict" description="In Ref. 2; DR731278." evidence="1" ref="2">
    <original>RLWE</original>
    <variation>LPWH</variation>
    <location>
        <begin position="92"/>
        <end position="95"/>
    </location>
</feature>
<feature type="sequence conflict" description="In Ref. 2; DR731278." evidence="1" ref="2">
    <original>AST</original>
    <variation>SSP</variation>
    <location>
        <begin position="110"/>
        <end position="112"/>
    </location>
</feature>
<feature type="sequence conflict" description="In Ref. 2; DR731278." evidence="1" ref="2">
    <original>Q</original>
    <variation>E</variation>
    <location>
        <position position="127"/>
    </location>
</feature>
<feature type="sequence conflict" description="In Ref. 2; DR731278." evidence="1" ref="2">
    <original>I</original>
    <variation>M</variation>
    <location>
        <position position="130"/>
    </location>
</feature>